<proteinExistence type="inferred from homology"/>
<keyword id="KW-0165">Cleavage on pair of basic residues</keyword>
<keyword id="KW-1015">Disulfide bond</keyword>
<keyword id="KW-0372">Hormone</keyword>
<keyword id="KW-0964">Secreted</keyword>
<keyword id="KW-0732">Signal</keyword>
<reference key="1">
    <citation type="journal article" date="1992" name="Gen. Comp. Endocrinol.">
        <title>Structure and expression of bombyxin-related peptide genes of the moth Samia cynthia ricini.</title>
        <authorList>
            <person name="Kimura-Kawakami M."/>
            <person name="Iwami M."/>
            <person name="Kawakami A."/>
            <person name="Nagasawa H."/>
            <person name="Suzuki A."/>
            <person name="Ishizaki H."/>
        </authorList>
    </citation>
    <scope>NUCLEOTIDE SEQUENCE [GENOMIC DNA]</scope>
</reference>
<dbReference type="EMBL" id="D13923">
    <property type="protein sequence ID" value="BAA03019.1"/>
    <property type="molecule type" value="Genomic_DNA"/>
</dbReference>
<dbReference type="PIR" id="JQ0902">
    <property type="entry name" value="JQ0902"/>
</dbReference>
<dbReference type="GO" id="GO:0005615">
    <property type="term" value="C:extracellular space"/>
    <property type="evidence" value="ECO:0007669"/>
    <property type="project" value="InterPro"/>
</dbReference>
<dbReference type="GO" id="GO:0008083">
    <property type="term" value="F:growth factor activity"/>
    <property type="evidence" value="ECO:0007669"/>
    <property type="project" value="InterPro"/>
</dbReference>
<dbReference type="GO" id="GO:0005179">
    <property type="term" value="F:hormone activity"/>
    <property type="evidence" value="ECO:0007669"/>
    <property type="project" value="UniProtKB-KW"/>
</dbReference>
<dbReference type="CDD" id="cd04366">
    <property type="entry name" value="IlGF_insulin_bombyxin_like"/>
    <property type="match status" value="1"/>
</dbReference>
<dbReference type="Gene3D" id="1.10.100.10">
    <property type="entry name" value="Insulin-like"/>
    <property type="match status" value="1"/>
</dbReference>
<dbReference type="InterPro" id="IPR017097">
    <property type="entry name" value="Bombyxin"/>
</dbReference>
<dbReference type="InterPro" id="IPR016179">
    <property type="entry name" value="Insulin-like"/>
</dbReference>
<dbReference type="InterPro" id="IPR036438">
    <property type="entry name" value="Insulin-like_sf"/>
</dbReference>
<dbReference type="InterPro" id="IPR022353">
    <property type="entry name" value="Insulin_CS"/>
</dbReference>
<dbReference type="InterPro" id="IPR022352">
    <property type="entry name" value="Insulin_family"/>
</dbReference>
<dbReference type="PANTHER" id="PTHR13647:SF4">
    <property type="entry name" value="INSULIN-LIKE PEPTIDE 1-RELATED"/>
    <property type="match status" value="1"/>
</dbReference>
<dbReference type="PANTHER" id="PTHR13647">
    <property type="entry name" value="INSULIN-LIKE PEPTIDE 2-RELATED"/>
    <property type="match status" value="1"/>
</dbReference>
<dbReference type="Pfam" id="PF00049">
    <property type="entry name" value="Insulin"/>
    <property type="match status" value="1"/>
</dbReference>
<dbReference type="PIRSF" id="PIRSF037038">
    <property type="entry name" value="Bombyxin"/>
    <property type="match status" value="1"/>
</dbReference>
<dbReference type="PRINTS" id="PR00276">
    <property type="entry name" value="INSULINFAMLY"/>
</dbReference>
<dbReference type="SMART" id="SM00078">
    <property type="entry name" value="IlGF"/>
    <property type="match status" value="1"/>
</dbReference>
<dbReference type="SUPFAM" id="SSF56994">
    <property type="entry name" value="Insulin-like"/>
    <property type="match status" value="1"/>
</dbReference>
<dbReference type="PROSITE" id="PS00262">
    <property type="entry name" value="INSULIN"/>
    <property type="match status" value="1"/>
</dbReference>
<accession>P33718</accession>
<sequence>MKTQVLFLVFALAAVMVSGDATPHVYCGRRLATMLSFVCDNQYQVKRTPYISPENEGYGWRWLEPQRARQLDGARGKRQGIAEECCNKPCTENELLGYC</sequence>
<feature type="signal peptide" evidence="1">
    <location>
        <begin position="1"/>
        <end position="19"/>
    </location>
</feature>
<feature type="peptide" id="PRO_0000016043" description="Bombyxin A-1 homolog B chain">
    <location>
        <begin position="20"/>
        <end position="45"/>
    </location>
</feature>
<feature type="propeptide" id="PRO_0000016044" description="C peptide like">
    <location>
        <begin position="48"/>
        <end position="76"/>
    </location>
</feature>
<feature type="peptide" id="PRO_0000016045" description="Bombyxin A-1 homolog A chain">
    <location>
        <begin position="79"/>
        <end position="99"/>
    </location>
</feature>
<feature type="disulfide bond" description="Interchain (between B and A chains)" evidence="1">
    <location>
        <begin position="27"/>
        <end position="86"/>
    </location>
</feature>
<feature type="disulfide bond" description="Interchain (between B and A chains)" evidence="1">
    <location>
        <begin position="39"/>
        <end position="99"/>
    </location>
</feature>
<feature type="disulfide bond" evidence="1">
    <location>
        <begin position="85"/>
        <end position="90"/>
    </location>
</feature>
<protein>
    <recommendedName>
        <fullName>Bombyxin A-1 homolog</fullName>
    </recommendedName>
    <component>
        <recommendedName>
            <fullName>Bombyxin A-1 homolog B chain</fullName>
        </recommendedName>
    </component>
    <component>
        <recommendedName>
            <fullName>Bombyxin A-1 homolog A chain</fullName>
        </recommendedName>
    </component>
</protein>
<evidence type="ECO:0000250" key="1"/>
<evidence type="ECO:0000305" key="2"/>
<comment type="function">
    <text>Brain peptide responsible for activation of prothoracic glands to produce ecdysone in insects.</text>
</comment>
<comment type="subunit">
    <text>Heterodimer of a B chain and an A chain linked by two disulfide bonds.</text>
</comment>
<comment type="subcellular location">
    <subcellularLocation>
        <location>Secreted</location>
    </subcellularLocation>
</comment>
<comment type="similarity">
    <text evidence="2">Belongs to the insulin family.</text>
</comment>
<organism>
    <name type="scientific">Samia cynthia</name>
    <name type="common">Ailanthus silkmoth</name>
    <name type="synonym">Phalaena cynthia</name>
    <dbReference type="NCBI Taxonomy" id="7127"/>
    <lineage>
        <taxon>Eukaryota</taxon>
        <taxon>Metazoa</taxon>
        <taxon>Ecdysozoa</taxon>
        <taxon>Arthropoda</taxon>
        <taxon>Hexapoda</taxon>
        <taxon>Insecta</taxon>
        <taxon>Pterygota</taxon>
        <taxon>Neoptera</taxon>
        <taxon>Endopterygota</taxon>
        <taxon>Lepidoptera</taxon>
        <taxon>Glossata</taxon>
        <taxon>Ditrysia</taxon>
        <taxon>Bombycoidea</taxon>
        <taxon>Saturniidae</taxon>
        <taxon>Saturniinae</taxon>
        <taxon>Attacini</taxon>
        <taxon>Samia</taxon>
    </lineage>
</organism>
<name>BXA1_SAMCY</name>
<gene>
    <name type="primary">SBXA1</name>
</gene>